<sequence length="76" mass="8413">MNEVTFGEVIKSVRVSVVADVCGLTPKAIYKWLERGSLPRTEFTGETEYADKIAKASGGKYSAAQIRRIGKQQFVM</sequence>
<protein>
    <recommendedName>
        <fullName>8.4 kDa cro protein</fullName>
    </recommendedName>
</protein>
<organismHost>
    <name type="scientific">Escherichia coli</name>
    <dbReference type="NCBI Taxonomy" id="562"/>
</organismHost>
<keyword id="KW-0238">DNA-binding</keyword>
<keyword id="KW-0678">Repressor</keyword>
<keyword id="KW-0804">Transcription</keyword>
<keyword id="KW-0805">Transcription regulation</keyword>
<gene>
    <name type="primary">cro-HTT</name>
</gene>
<feature type="chain" id="PRO_0000077577" description="8.4 kDa cro protein">
    <location>
        <begin position="1"/>
        <end position="76"/>
    </location>
</feature>
<organism>
    <name type="scientific">Escherichia phage HK022</name>
    <name type="common">Bacteriophage HK022</name>
    <dbReference type="NCBI Taxonomy" id="10742"/>
    <lineage>
        <taxon>Viruses</taxon>
        <taxon>Duplodnaviria</taxon>
        <taxon>Heunggongvirae</taxon>
        <taxon>Uroviricota</taxon>
        <taxon>Caudoviricetes</taxon>
        <taxon>Hendrixvirinae</taxon>
        <taxon>Shamshuipovirus</taxon>
    </lineage>
</organism>
<proteinExistence type="predicted"/>
<dbReference type="EMBL" id="X16093">
    <property type="protein sequence ID" value="CAA34223.1"/>
    <property type="molecule type" value="Genomic_DNA"/>
</dbReference>
<dbReference type="EMBL" id="U02466">
    <property type="protein sequence ID" value="AAB60269.1"/>
    <property type="molecule type" value="Unassigned_DNA"/>
</dbReference>
<dbReference type="PIR" id="S06542">
    <property type="entry name" value="RGBPHK"/>
</dbReference>
<dbReference type="SMR" id="P18679"/>
<dbReference type="GO" id="GO:0003677">
    <property type="term" value="F:DNA binding"/>
    <property type="evidence" value="ECO:0007669"/>
    <property type="project" value="UniProtKB-KW"/>
</dbReference>
<dbReference type="Gene3D" id="1.10.260.40">
    <property type="entry name" value="lambda repressor-like DNA-binding domains"/>
    <property type="match status" value="1"/>
</dbReference>
<dbReference type="InterPro" id="IPR010982">
    <property type="entry name" value="Lambda_DNA-bd_dom_sf"/>
</dbReference>
<name>RCRO_BPHK0</name>
<reference key="1">
    <citation type="journal article" date="1989" name="J. Mol. Biol.">
        <title>Structure and function of the nun gene and the immunity region of the lambdoid phage HK022.</title>
        <authorList>
            <person name="Oberto J."/>
            <person name="Weisberg R.A."/>
            <person name="Gottesman M.E."/>
        </authorList>
    </citation>
    <scope>NUCLEOTIDE SEQUENCE</scope>
</reference>
<reference key="2">
    <citation type="submission" date="1993-12" db="EMBL/GenBank/DDBJ databases">
        <authorList>
            <person name="Oberto J."/>
        </authorList>
    </citation>
    <scope>SEQUENCE REVISION</scope>
</reference>
<accession>P18679</accession>